<evidence type="ECO:0000255" key="1">
    <source>
        <dbReference type="HAMAP-Rule" id="MF_01342"/>
    </source>
</evidence>
<evidence type="ECO:0000256" key="2">
    <source>
        <dbReference type="SAM" id="MobiDB-lite"/>
    </source>
</evidence>
<evidence type="ECO:0000305" key="3"/>
<accession>Q3IF18</accession>
<name>RL16_PSET1</name>
<dbReference type="EMBL" id="CR954246">
    <property type="protein sequence ID" value="CAI85255.1"/>
    <property type="molecule type" value="Genomic_DNA"/>
</dbReference>
<dbReference type="SMR" id="Q3IF18"/>
<dbReference type="STRING" id="326442.PSHAa0151"/>
<dbReference type="KEGG" id="pha:PSHAa0151"/>
<dbReference type="eggNOG" id="COG0197">
    <property type="taxonomic scope" value="Bacteria"/>
</dbReference>
<dbReference type="HOGENOM" id="CLU_078858_2_1_6"/>
<dbReference type="BioCyc" id="PHAL326442:PSHA_RS00770-MONOMER"/>
<dbReference type="Proteomes" id="UP000006843">
    <property type="component" value="Chromosome I"/>
</dbReference>
<dbReference type="GO" id="GO:0022625">
    <property type="term" value="C:cytosolic large ribosomal subunit"/>
    <property type="evidence" value="ECO:0007669"/>
    <property type="project" value="TreeGrafter"/>
</dbReference>
<dbReference type="GO" id="GO:0019843">
    <property type="term" value="F:rRNA binding"/>
    <property type="evidence" value="ECO:0007669"/>
    <property type="project" value="UniProtKB-UniRule"/>
</dbReference>
<dbReference type="GO" id="GO:0003735">
    <property type="term" value="F:structural constituent of ribosome"/>
    <property type="evidence" value="ECO:0007669"/>
    <property type="project" value="InterPro"/>
</dbReference>
<dbReference type="GO" id="GO:0000049">
    <property type="term" value="F:tRNA binding"/>
    <property type="evidence" value="ECO:0007669"/>
    <property type="project" value="UniProtKB-KW"/>
</dbReference>
<dbReference type="GO" id="GO:0006412">
    <property type="term" value="P:translation"/>
    <property type="evidence" value="ECO:0007669"/>
    <property type="project" value="UniProtKB-UniRule"/>
</dbReference>
<dbReference type="CDD" id="cd01433">
    <property type="entry name" value="Ribosomal_L16_L10e"/>
    <property type="match status" value="1"/>
</dbReference>
<dbReference type="FunFam" id="3.90.1170.10:FF:000001">
    <property type="entry name" value="50S ribosomal protein L16"/>
    <property type="match status" value="1"/>
</dbReference>
<dbReference type="Gene3D" id="3.90.1170.10">
    <property type="entry name" value="Ribosomal protein L10e/L16"/>
    <property type="match status" value="1"/>
</dbReference>
<dbReference type="HAMAP" id="MF_01342">
    <property type="entry name" value="Ribosomal_uL16"/>
    <property type="match status" value="1"/>
</dbReference>
<dbReference type="InterPro" id="IPR047873">
    <property type="entry name" value="Ribosomal_uL16"/>
</dbReference>
<dbReference type="InterPro" id="IPR000114">
    <property type="entry name" value="Ribosomal_uL16_bact-type"/>
</dbReference>
<dbReference type="InterPro" id="IPR020798">
    <property type="entry name" value="Ribosomal_uL16_CS"/>
</dbReference>
<dbReference type="InterPro" id="IPR016180">
    <property type="entry name" value="Ribosomal_uL16_dom"/>
</dbReference>
<dbReference type="InterPro" id="IPR036920">
    <property type="entry name" value="Ribosomal_uL16_sf"/>
</dbReference>
<dbReference type="NCBIfam" id="TIGR01164">
    <property type="entry name" value="rplP_bact"/>
    <property type="match status" value="1"/>
</dbReference>
<dbReference type="PANTHER" id="PTHR12220">
    <property type="entry name" value="50S/60S RIBOSOMAL PROTEIN L16"/>
    <property type="match status" value="1"/>
</dbReference>
<dbReference type="PANTHER" id="PTHR12220:SF13">
    <property type="entry name" value="LARGE RIBOSOMAL SUBUNIT PROTEIN UL16M"/>
    <property type="match status" value="1"/>
</dbReference>
<dbReference type="Pfam" id="PF00252">
    <property type="entry name" value="Ribosomal_L16"/>
    <property type="match status" value="1"/>
</dbReference>
<dbReference type="PRINTS" id="PR00060">
    <property type="entry name" value="RIBOSOMALL16"/>
</dbReference>
<dbReference type="SUPFAM" id="SSF54686">
    <property type="entry name" value="Ribosomal protein L16p/L10e"/>
    <property type="match status" value="1"/>
</dbReference>
<dbReference type="PROSITE" id="PS00586">
    <property type="entry name" value="RIBOSOMAL_L16_1"/>
    <property type="match status" value="1"/>
</dbReference>
<dbReference type="PROSITE" id="PS00701">
    <property type="entry name" value="RIBOSOMAL_L16_2"/>
    <property type="match status" value="1"/>
</dbReference>
<organism>
    <name type="scientific">Pseudoalteromonas translucida (strain TAC 125)</name>
    <dbReference type="NCBI Taxonomy" id="326442"/>
    <lineage>
        <taxon>Bacteria</taxon>
        <taxon>Pseudomonadati</taxon>
        <taxon>Pseudomonadota</taxon>
        <taxon>Gammaproteobacteria</taxon>
        <taxon>Alteromonadales</taxon>
        <taxon>Pseudoalteromonadaceae</taxon>
        <taxon>Pseudoalteromonas</taxon>
    </lineage>
</organism>
<sequence length="137" mass="15661">MLQPKRTKFRKTHKGRNRGLAQNGNKVSFGTFGLKATGRGRMTARQIEAARRAMTRHVKRQGKIWIRVFPDKPITNKPLEVRMGKGKGSVEYWVAEIQPGKVLYEMEGVSEELAREAFDLAARKLPFKTTFVTRTVM</sequence>
<reference key="1">
    <citation type="journal article" date="2005" name="Genome Res.">
        <title>Coping with cold: the genome of the versatile marine Antarctica bacterium Pseudoalteromonas haloplanktis TAC125.</title>
        <authorList>
            <person name="Medigue C."/>
            <person name="Krin E."/>
            <person name="Pascal G."/>
            <person name="Barbe V."/>
            <person name="Bernsel A."/>
            <person name="Bertin P.N."/>
            <person name="Cheung F."/>
            <person name="Cruveiller S."/>
            <person name="D'Amico S."/>
            <person name="Duilio A."/>
            <person name="Fang G."/>
            <person name="Feller G."/>
            <person name="Ho C."/>
            <person name="Mangenot S."/>
            <person name="Marino G."/>
            <person name="Nilsson J."/>
            <person name="Parrilli E."/>
            <person name="Rocha E.P.C."/>
            <person name="Rouy Z."/>
            <person name="Sekowska A."/>
            <person name="Tutino M.L."/>
            <person name="Vallenet D."/>
            <person name="von Heijne G."/>
            <person name="Danchin A."/>
        </authorList>
    </citation>
    <scope>NUCLEOTIDE SEQUENCE [LARGE SCALE GENOMIC DNA]</scope>
    <source>
        <strain>TAC 125</strain>
    </source>
</reference>
<feature type="chain" id="PRO_0000062172" description="Large ribosomal subunit protein uL16">
    <location>
        <begin position="1"/>
        <end position="137"/>
    </location>
</feature>
<feature type="region of interest" description="Disordered" evidence="2">
    <location>
        <begin position="1"/>
        <end position="23"/>
    </location>
</feature>
<feature type="compositionally biased region" description="Basic residues" evidence="2">
    <location>
        <begin position="1"/>
        <end position="17"/>
    </location>
</feature>
<gene>
    <name evidence="1" type="primary">rplP</name>
    <name type="ordered locus">PSHAa0151</name>
</gene>
<keyword id="KW-1185">Reference proteome</keyword>
<keyword id="KW-0687">Ribonucleoprotein</keyword>
<keyword id="KW-0689">Ribosomal protein</keyword>
<keyword id="KW-0694">RNA-binding</keyword>
<keyword id="KW-0699">rRNA-binding</keyword>
<keyword id="KW-0820">tRNA-binding</keyword>
<comment type="function">
    <text evidence="1">Binds 23S rRNA and is also seen to make contacts with the A and possibly P site tRNAs.</text>
</comment>
<comment type="subunit">
    <text evidence="1">Part of the 50S ribosomal subunit.</text>
</comment>
<comment type="similarity">
    <text evidence="1">Belongs to the universal ribosomal protein uL16 family.</text>
</comment>
<proteinExistence type="inferred from homology"/>
<protein>
    <recommendedName>
        <fullName evidence="1">Large ribosomal subunit protein uL16</fullName>
    </recommendedName>
    <alternativeName>
        <fullName evidence="3">50S ribosomal protein L16</fullName>
    </alternativeName>
</protein>